<protein>
    <recommendedName>
        <fullName evidence="1">Phosphoribosylformylglycinamidine synthase subunit PurL</fullName>
        <shortName evidence="1">FGAM synthase</shortName>
        <ecNumber evidence="1">6.3.5.3</ecNumber>
    </recommendedName>
    <alternativeName>
        <fullName evidence="1">Formylglycinamide ribonucleotide amidotransferase subunit II</fullName>
        <shortName evidence="1">FGAR amidotransferase II</shortName>
        <shortName evidence="1">FGAR-AT II</shortName>
    </alternativeName>
    <alternativeName>
        <fullName evidence="1">Glutamine amidotransferase PurL</fullName>
    </alternativeName>
    <alternativeName>
        <fullName evidence="1">Phosphoribosylformylglycinamidine synthase subunit II</fullName>
    </alternativeName>
</protein>
<dbReference type="EC" id="6.3.5.3" evidence="1"/>
<dbReference type="EMBL" id="CP000724">
    <property type="protein sequence ID" value="ABR47141.1"/>
    <property type="molecule type" value="Genomic_DNA"/>
</dbReference>
<dbReference type="RefSeq" id="WP_012062183.1">
    <property type="nucleotide sequence ID" value="NC_009633.1"/>
</dbReference>
<dbReference type="SMR" id="A6TLS3"/>
<dbReference type="STRING" id="293826.Amet_0921"/>
<dbReference type="KEGG" id="amt:Amet_0921"/>
<dbReference type="eggNOG" id="COG0046">
    <property type="taxonomic scope" value="Bacteria"/>
</dbReference>
<dbReference type="HOGENOM" id="CLU_003100_0_1_9"/>
<dbReference type="OrthoDB" id="9804441at2"/>
<dbReference type="UniPathway" id="UPA00074">
    <property type="reaction ID" value="UER00128"/>
</dbReference>
<dbReference type="Proteomes" id="UP000001572">
    <property type="component" value="Chromosome"/>
</dbReference>
<dbReference type="GO" id="GO:0005737">
    <property type="term" value="C:cytoplasm"/>
    <property type="evidence" value="ECO:0007669"/>
    <property type="project" value="UniProtKB-SubCell"/>
</dbReference>
<dbReference type="GO" id="GO:0005524">
    <property type="term" value="F:ATP binding"/>
    <property type="evidence" value="ECO:0007669"/>
    <property type="project" value="UniProtKB-UniRule"/>
</dbReference>
<dbReference type="GO" id="GO:0000287">
    <property type="term" value="F:magnesium ion binding"/>
    <property type="evidence" value="ECO:0007669"/>
    <property type="project" value="UniProtKB-UniRule"/>
</dbReference>
<dbReference type="GO" id="GO:0004642">
    <property type="term" value="F:phosphoribosylformylglycinamidine synthase activity"/>
    <property type="evidence" value="ECO:0007669"/>
    <property type="project" value="UniProtKB-UniRule"/>
</dbReference>
<dbReference type="GO" id="GO:0006189">
    <property type="term" value="P:'de novo' IMP biosynthetic process"/>
    <property type="evidence" value="ECO:0007669"/>
    <property type="project" value="UniProtKB-UniRule"/>
</dbReference>
<dbReference type="CDD" id="cd02203">
    <property type="entry name" value="PurL_repeat1"/>
    <property type="match status" value="1"/>
</dbReference>
<dbReference type="CDD" id="cd02204">
    <property type="entry name" value="PurL_repeat2"/>
    <property type="match status" value="1"/>
</dbReference>
<dbReference type="FunFam" id="3.30.1330.10:FF:000004">
    <property type="entry name" value="Phosphoribosylformylglycinamidine synthase subunit PurL"/>
    <property type="match status" value="1"/>
</dbReference>
<dbReference type="Gene3D" id="3.90.650.10">
    <property type="entry name" value="PurM-like C-terminal domain"/>
    <property type="match status" value="2"/>
</dbReference>
<dbReference type="Gene3D" id="3.30.1330.10">
    <property type="entry name" value="PurM-like, N-terminal domain"/>
    <property type="match status" value="2"/>
</dbReference>
<dbReference type="HAMAP" id="MF_00420">
    <property type="entry name" value="PurL_2"/>
    <property type="match status" value="1"/>
</dbReference>
<dbReference type="InterPro" id="IPR010074">
    <property type="entry name" value="PRibForGlyAmidine_synth_PurL"/>
</dbReference>
<dbReference type="InterPro" id="IPR041609">
    <property type="entry name" value="PurL_linker"/>
</dbReference>
<dbReference type="InterPro" id="IPR010918">
    <property type="entry name" value="PurM-like_C_dom"/>
</dbReference>
<dbReference type="InterPro" id="IPR036676">
    <property type="entry name" value="PurM-like_C_sf"/>
</dbReference>
<dbReference type="InterPro" id="IPR016188">
    <property type="entry name" value="PurM-like_N"/>
</dbReference>
<dbReference type="InterPro" id="IPR036921">
    <property type="entry name" value="PurM-like_N_sf"/>
</dbReference>
<dbReference type="NCBIfam" id="TIGR01736">
    <property type="entry name" value="FGAM_synth_II"/>
    <property type="match status" value="1"/>
</dbReference>
<dbReference type="NCBIfam" id="NF002290">
    <property type="entry name" value="PRK01213.1"/>
    <property type="match status" value="1"/>
</dbReference>
<dbReference type="PANTHER" id="PTHR43555">
    <property type="entry name" value="PHOSPHORIBOSYLFORMYLGLYCINAMIDINE SYNTHASE SUBUNIT PURL"/>
    <property type="match status" value="1"/>
</dbReference>
<dbReference type="PANTHER" id="PTHR43555:SF1">
    <property type="entry name" value="PHOSPHORIBOSYLFORMYLGLYCINAMIDINE SYNTHASE SUBUNIT PURL"/>
    <property type="match status" value="1"/>
</dbReference>
<dbReference type="Pfam" id="PF00586">
    <property type="entry name" value="AIRS"/>
    <property type="match status" value="2"/>
</dbReference>
<dbReference type="Pfam" id="PF02769">
    <property type="entry name" value="AIRS_C"/>
    <property type="match status" value="2"/>
</dbReference>
<dbReference type="Pfam" id="PF18072">
    <property type="entry name" value="FGAR-AT_linker"/>
    <property type="match status" value="1"/>
</dbReference>
<dbReference type="PIRSF" id="PIRSF001587">
    <property type="entry name" value="FGAM_synthase_II"/>
    <property type="match status" value="1"/>
</dbReference>
<dbReference type="SUPFAM" id="SSF56042">
    <property type="entry name" value="PurM C-terminal domain-like"/>
    <property type="match status" value="2"/>
</dbReference>
<dbReference type="SUPFAM" id="SSF55326">
    <property type="entry name" value="PurM N-terminal domain-like"/>
    <property type="match status" value="2"/>
</dbReference>
<keyword id="KW-0067">ATP-binding</keyword>
<keyword id="KW-0963">Cytoplasm</keyword>
<keyword id="KW-0436">Ligase</keyword>
<keyword id="KW-0460">Magnesium</keyword>
<keyword id="KW-0479">Metal-binding</keyword>
<keyword id="KW-0547">Nucleotide-binding</keyword>
<keyword id="KW-0658">Purine biosynthesis</keyword>
<keyword id="KW-1185">Reference proteome</keyword>
<sequence>MTNQYEAVGLKAKEYEGIVEMLGREPNELELNLYGVMWSEHCSYKHSRSMFKHFPTSGPSVLQGPGENAGIVDIGDGLAIAMKIESHNHPSAIEPYQGAATGVGGIIRDIFAMGARPIALLNSLRFGELEGDARVKYLLEGVVEGIAGYGNCMGIPTVGGEVYFNQSYRGNPLVNAMCVGLIEHDAIHRGTASGVGNSIMYVGAATGRDGIGGASFASATLTEESEEKRAAVQVGDPFMEKLLLEACLELLKTGSIIGIQDLGAAGLVSACCETATRGEGGMEIDVLKVPRRETGMVPVEVMISESQERMLLIVERGREEEVNEIVKKWGLHSVIIGRVTNDDKLRIFEGDKVVGEIPAESLDSSGAPRYEPDYAPPADLAELQKLDIESIPEPRDLSSTLRKLLASPNIASKEWIYRQYDHMVRTNTVIKPGSDAAVLRIRGTKKGIALTTDCNSRYCYLDPREGSKIAVVEAARNIVCSGGKPIAITDGLNFGSPETPEGYWQFRESVLGLSEACREMDTPVISGNVSFYNQTEKGSIHPTPIVGMVGLIEDISKTCTMAFKEAGDIIVLLGQTKAEIGGSEYLASIHGQEKGKIPHLNLSLEKRLQKEVLALIQGDLVQSAHDLSEGGLAVGVAECAIAGGIGARVEVNTELRNDIVLFSESQSRFLMTIKPEHLETVQERLKQSNIPHEQLGTVIGNELQMQINGNVVVKESIGELEEIWRGALQCLMESMKID</sequence>
<comment type="function">
    <text evidence="1">Part of the phosphoribosylformylglycinamidine synthase complex involved in the purines biosynthetic pathway. Catalyzes the ATP-dependent conversion of formylglycinamide ribonucleotide (FGAR) and glutamine to yield formylglycinamidine ribonucleotide (FGAM) and glutamate. The FGAM synthase complex is composed of three subunits. PurQ produces an ammonia molecule by converting glutamine to glutamate. PurL transfers the ammonia molecule to FGAR to form FGAM in an ATP-dependent manner. PurS interacts with PurQ and PurL and is thought to assist in the transfer of the ammonia molecule from PurQ to PurL.</text>
</comment>
<comment type="catalytic activity">
    <reaction evidence="1">
        <text>N(2)-formyl-N(1)-(5-phospho-beta-D-ribosyl)glycinamide + L-glutamine + ATP + H2O = 2-formamido-N(1)-(5-O-phospho-beta-D-ribosyl)acetamidine + L-glutamate + ADP + phosphate + H(+)</text>
        <dbReference type="Rhea" id="RHEA:17129"/>
        <dbReference type="ChEBI" id="CHEBI:15377"/>
        <dbReference type="ChEBI" id="CHEBI:15378"/>
        <dbReference type="ChEBI" id="CHEBI:29985"/>
        <dbReference type="ChEBI" id="CHEBI:30616"/>
        <dbReference type="ChEBI" id="CHEBI:43474"/>
        <dbReference type="ChEBI" id="CHEBI:58359"/>
        <dbReference type="ChEBI" id="CHEBI:147286"/>
        <dbReference type="ChEBI" id="CHEBI:147287"/>
        <dbReference type="ChEBI" id="CHEBI:456216"/>
        <dbReference type="EC" id="6.3.5.3"/>
    </reaction>
</comment>
<comment type="pathway">
    <text evidence="1">Purine metabolism; IMP biosynthesis via de novo pathway; 5-amino-1-(5-phospho-D-ribosyl)imidazole from N(2)-formyl-N(1)-(5-phospho-D-ribosyl)glycinamide: step 1/2.</text>
</comment>
<comment type="subunit">
    <text evidence="1">Monomer. Part of the FGAM synthase complex composed of 1 PurL, 1 PurQ and 2 PurS subunits.</text>
</comment>
<comment type="subcellular location">
    <subcellularLocation>
        <location evidence="1">Cytoplasm</location>
    </subcellularLocation>
</comment>
<comment type="similarity">
    <text evidence="1">Belongs to the FGAMS family.</text>
</comment>
<name>PURL_ALKMQ</name>
<evidence type="ECO:0000255" key="1">
    <source>
        <dbReference type="HAMAP-Rule" id="MF_00420"/>
    </source>
</evidence>
<accession>A6TLS3</accession>
<gene>
    <name evidence="1" type="primary">purL</name>
    <name type="ordered locus">Amet_0921</name>
</gene>
<feature type="chain" id="PRO_1000060086" description="Phosphoribosylformylglycinamidine synthase subunit PurL">
    <location>
        <begin position="1"/>
        <end position="738"/>
    </location>
</feature>
<feature type="active site" evidence="1">
    <location>
        <position position="41"/>
    </location>
</feature>
<feature type="active site" description="Proton acceptor" evidence="1">
    <location>
        <position position="87"/>
    </location>
</feature>
<feature type="binding site" evidence="1">
    <location>
        <position position="44"/>
    </location>
    <ligand>
        <name>ATP</name>
        <dbReference type="ChEBI" id="CHEBI:30616"/>
    </ligand>
</feature>
<feature type="binding site" evidence="1">
    <location>
        <position position="83"/>
    </location>
    <ligand>
        <name>ATP</name>
        <dbReference type="ChEBI" id="CHEBI:30616"/>
    </ligand>
</feature>
<feature type="binding site" evidence="1">
    <location>
        <position position="85"/>
    </location>
    <ligand>
        <name>Mg(2+)</name>
        <dbReference type="ChEBI" id="CHEBI:18420"/>
        <label>1</label>
    </ligand>
</feature>
<feature type="binding site" evidence="1">
    <location>
        <begin position="86"/>
        <end position="89"/>
    </location>
    <ligand>
        <name>substrate</name>
    </ligand>
</feature>
<feature type="binding site" evidence="1">
    <location>
        <position position="108"/>
    </location>
    <ligand>
        <name>substrate</name>
    </ligand>
</feature>
<feature type="binding site" evidence="1">
    <location>
        <position position="109"/>
    </location>
    <ligand>
        <name>Mg(2+)</name>
        <dbReference type="ChEBI" id="CHEBI:18420"/>
        <label>2</label>
    </ligand>
</feature>
<feature type="binding site" evidence="1">
    <location>
        <position position="233"/>
    </location>
    <ligand>
        <name>substrate</name>
    </ligand>
</feature>
<feature type="binding site" evidence="1">
    <location>
        <position position="261"/>
    </location>
    <ligand>
        <name>Mg(2+)</name>
        <dbReference type="ChEBI" id="CHEBI:18420"/>
        <label>2</label>
    </ligand>
</feature>
<feature type="binding site" evidence="1">
    <location>
        <begin position="305"/>
        <end position="307"/>
    </location>
    <ligand>
        <name>substrate</name>
    </ligand>
</feature>
<feature type="binding site" evidence="1">
    <location>
        <position position="490"/>
    </location>
    <ligand>
        <name>ATP</name>
        <dbReference type="ChEBI" id="CHEBI:30616"/>
    </ligand>
</feature>
<feature type="binding site" evidence="1">
    <location>
        <position position="527"/>
    </location>
    <ligand>
        <name>ATP</name>
        <dbReference type="ChEBI" id="CHEBI:30616"/>
    </ligand>
</feature>
<feature type="binding site" evidence="1">
    <location>
        <position position="528"/>
    </location>
    <ligand>
        <name>Mg(2+)</name>
        <dbReference type="ChEBI" id="CHEBI:18420"/>
        <label>1</label>
    </ligand>
</feature>
<feature type="binding site" evidence="1">
    <location>
        <position position="530"/>
    </location>
    <ligand>
        <name>substrate</name>
    </ligand>
</feature>
<organism>
    <name type="scientific">Alkaliphilus metalliredigens (strain QYMF)</name>
    <dbReference type="NCBI Taxonomy" id="293826"/>
    <lineage>
        <taxon>Bacteria</taxon>
        <taxon>Bacillati</taxon>
        <taxon>Bacillota</taxon>
        <taxon>Clostridia</taxon>
        <taxon>Peptostreptococcales</taxon>
        <taxon>Natronincolaceae</taxon>
        <taxon>Alkaliphilus</taxon>
    </lineage>
</organism>
<reference key="1">
    <citation type="journal article" date="2016" name="Genome Announc.">
        <title>Complete genome sequence of Alkaliphilus metalliredigens strain QYMF, an alkaliphilic and metal-reducing bacterium isolated from borax-contaminated leachate ponds.</title>
        <authorList>
            <person name="Hwang C."/>
            <person name="Copeland A."/>
            <person name="Lucas S."/>
            <person name="Lapidus A."/>
            <person name="Barry K."/>
            <person name="Detter J.C."/>
            <person name="Glavina Del Rio T."/>
            <person name="Hammon N."/>
            <person name="Israni S."/>
            <person name="Dalin E."/>
            <person name="Tice H."/>
            <person name="Pitluck S."/>
            <person name="Chertkov O."/>
            <person name="Brettin T."/>
            <person name="Bruce D."/>
            <person name="Han C."/>
            <person name="Schmutz J."/>
            <person name="Larimer F."/>
            <person name="Land M.L."/>
            <person name="Hauser L."/>
            <person name="Kyrpides N."/>
            <person name="Mikhailova N."/>
            <person name="Ye Q."/>
            <person name="Zhou J."/>
            <person name="Richardson P."/>
            <person name="Fields M.W."/>
        </authorList>
    </citation>
    <scope>NUCLEOTIDE SEQUENCE [LARGE SCALE GENOMIC DNA]</scope>
    <source>
        <strain>QYMF</strain>
    </source>
</reference>
<proteinExistence type="inferred from homology"/>